<protein>
    <recommendedName>
        <fullName evidence="1">Adenine deaminase</fullName>
        <shortName evidence="1">Adenase</shortName>
        <shortName evidence="1">Adenine aminase</shortName>
        <ecNumber evidence="1">3.5.4.2</ecNumber>
    </recommendedName>
</protein>
<reference key="1">
    <citation type="journal article" date="2004" name="Nucleic Acids Res.">
        <title>Thermoadaptation trait revealed by the genome sequence of thermophilic Geobacillus kaustophilus.</title>
        <authorList>
            <person name="Takami H."/>
            <person name="Takaki Y."/>
            <person name="Chee G.-J."/>
            <person name="Nishi S."/>
            <person name="Shimamura S."/>
            <person name="Suzuki H."/>
            <person name="Matsui S."/>
            <person name="Uchiyama I."/>
        </authorList>
    </citation>
    <scope>NUCLEOTIDE SEQUENCE [LARGE SCALE GENOMIC DNA]</scope>
    <source>
        <strain>HTA426</strain>
    </source>
</reference>
<sequence>MHSTLHNQIAAAAKQTKADLVIQNGKIVNVFTREIIEGDLAIVEGMIVGIGRYEGEKTIDAEGRYICPGLIDGHVHIESSMVPPSEFARVVLPHGVTTVIADPHEIANVAGVCGIQFMLDEAKRTPLDVYMMLPSCVPAASFERAGAVLSAAELAPFFNDERVLGLAEVMDYPSLREQHPSMLDKLALAANANRLIDGHLAGLDADAVNVYRSARIHTDHECVTPDEALERVRRGMYVLIRQGSVAKDLKKLLPAIHEHNARRFLFCTDDKHLDDLWFEGSVDHNVRLAIQAGLDPLLAIQMATLNAAECYRLPTKGAVAPGYDADFLFVDDLETLNITHVFKAGRLVAQHGQTVFPAERSAESLEQPLLHSIRCQAVDETDLRIPMKRGTKAHVIEIIPNHLHTNHLITDVDVQEGAFCPSIERDLLKLVVVERHRGLGIGLGIVRGFGFKAGAIASSIAHDSHHIIAAGTNDRDLTAAIEQLRQQHGGLAVIKDGAVLASLPLEIGGLMTRKDYTEVLSGLKQIDKALKAIGANGSFNPFITLSFLALPVIPELKLTDQGLFDVNKWEFIPVEAV</sequence>
<dbReference type="EC" id="3.5.4.2" evidence="1"/>
<dbReference type="EMBL" id="BA000043">
    <property type="protein sequence ID" value="BAD76383.1"/>
    <property type="molecule type" value="Genomic_DNA"/>
</dbReference>
<dbReference type="RefSeq" id="WP_011231583.1">
    <property type="nucleotide sequence ID" value="NC_006510.1"/>
</dbReference>
<dbReference type="SMR" id="Q5KY53"/>
<dbReference type="STRING" id="235909.GK2098"/>
<dbReference type="KEGG" id="gka:GK2098"/>
<dbReference type="PATRIC" id="fig|235909.7.peg.2251"/>
<dbReference type="eggNOG" id="COG1001">
    <property type="taxonomic scope" value="Bacteria"/>
</dbReference>
<dbReference type="HOGENOM" id="CLU_027935_0_0_9"/>
<dbReference type="Proteomes" id="UP000001172">
    <property type="component" value="Chromosome"/>
</dbReference>
<dbReference type="GO" id="GO:0000034">
    <property type="term" value="F:adenine deaminase activity"/>
    <property type="evidence" value="ECO:0007669"/>
    <property type="project" value="UniProtKB-UniRule"/>
</dbReference>
<dbReference type="GO" id="GO:0006146">
    <property type="term" value="P:adenine catabolic process"/>
    <property type="evidence" value="ECO:0007669"/>
    <property type="project" value="InterPro"/>
</dbReference>
<dbReference type="CDD" id="cd01295">
    <property type="entry name" value="AdeC"/>
    <property type="match status" value="1"/>
</dbReference>
<dbReference type="FunFam" id="3.20.20.140:FF:000016">
    <property type="entry name" value="Adenine deaminase"/>
    <property type="match status" value="1"/>
</dbReference>
<dbReference type="Gene3D" id="3.20.20.140">
    <property type="entry name" value="Metal-dependent hydrolases"/>
    <property type="match status" value="1"/>
</dbReference>
<dbReference type="Gene3D" id="2.30.40.10">
    <property type="entry name" value="Urease, subunit C, domain 1"/>
    <property type="match status" value="1"/>
</dbReference>
<dbReference type="HAMAP" id="MF_01518">
    <property type="entry name" value="Adenine_deamin"/>
    <property type="match status" value="1"/>
</dbReference>
<dbReference type="InterPro" id="IPR006679">
    <property type="entry name" value="Adenine_deam"/>
</dbReference>
<dbReference type="InterPro" id="IPR026912">
    <property type="entry name" value="Adenine_deam_C"/>
</dbReference>
<dbReference type="InterPro" id="IPR006680">
    <property type="entry name" value="Amidohydro-rel"/>
</dbReference>
<dbReference type="InterPro" id="IPR011059">
    <property type="entry name" value="Metal-dep_hydrolase_composite"/>
</dbReference>
<dbReference type="InterPro" id="IPR032466">
    <property type="entry name" value="Metal_Hydrolase"/>
</dbReference>
<dbReference type="NCBIfam" id="TIGR01178">
    <property type="entry name" value="ade"/>
    <property type="match status" value="1"/>
</dbReference>
<dbReference type="PANTHER" id="PTHR11113:SF2">
    <property type="entry name" value="ADENINE DEAMINASE"/>
    <property type="match status" value="1"/>
</dbReference>
<dbReference type="PANTHER" id="PTHR11113">
    <property type="entry name" value="N-ACETYLGLUCOSAMINE-6-PHOSPHATE DEACETYLASE"/>
    <property type="match status" value="1"/>
</dbReference>
<dbReference type="Pfam" id="PF13382">
    <property type="entry name" value="Adenine_deam_C"/>
    <property type="match status" value="1"/>
</dbReference>
<dbReference type="Pfam" id="PF01979">
    <property type="entry name" value="Amidohydro_1"/>
    <property type="match status" value="1"/>
</dbReference>
<dbReference type="SUPFAM" id="SSF51338">
    <property type="entry name" value="Composite domain of metallo-dependent hydrolases"/>
    <property type="match status" value="1"/>
</dbReference>
<dbReference type="SUPFAM" id="SSF51556">
    <property type="entry name" value="Metallo-dependent hydrolases"/>
    <property type="match status" value="1"/>
</dbReference>
<proteinExistence type="inferred from homology"/>
<gene>
    <name evidence="1" type="primary">ade</name>
    <name type="ordered locus">GK2098</name>
</gene>
<feature type="chain" id="PRO_0000142424" description="Adenine deaminase">
    <location>
        <begin position="1"/>
        <end position="577"/>
    </location>
</feature>
<organism>
    <name type="scientific">Geobacillus kaustophilus (strain HTA426)</name>
    <dbReference type="NCBI Taxonomy" id="235909"/>
    <lineage>
        <taxon>Bacteria</taxon>
        <taxon>Bacillati</taxon>
        <taxon>Bacillota</taxon>
        <taxon>Bacilli</taxon>
        <taxon>Bacillales</taxon>
        <taxon>Anoxybacillaceae</taxon>
        <taxon>Geobacillus</taxon>
        <taxon>Geobacillus thermoleovorans group</taxon>
    </lineage>
</organism>
<evidence type="ECO:0000255" key="1">
    <source>
        <dbReference type="HAMAP-Rule" id="MF_01518"/>
    </source>
</evidence>
<comment type="catalytic activity">
    <reaction evidence="1">
        <text>adenine + H2O + H(+) = hypoxanthine + NH4(+)</text>
        <dbReference type="Rhea" id="RHEA:23688"/>
        <dbReference type="ChEBI" id="CHEBI:15377"/>
        <dbReference type="ChEBI" id="CHEBI:15378"/>
        <dbReference type="ChEBI" id="CHEBI:16708"/>
        <dbReference type="ChEBI" id="CHEBI:17368"/>
        <dbReference type="ChEBI" id="CHEBI:28938"/>
        <dbReference type="EC" id="3.5.4.2"/>
    </reaction>
</comment>
<comment type="cofactor">
    <cofactor evidence="1">
        <name>Mn(2+)</name>
        <dbReference type="ChEBI" id="CHEBI:29035"/>
    </cofactor>
</comment>
<comment type="similarity">
    <text evidence="1">Belongs to the metallo-dependent hydrolases superfamily. Adenine deaminase family.</text>
</comment>
<keyword id="KW-0378">Hydrolase</keyword>
<keyword id="KW-0464">Manganese</keyword>
<keyword id="KW-1185">Reference proteome</keyword>
<name>ADEC_GEOKA</name>
<accession>Q5KY53</accession>